<proteinExistence type="evidence at transcript level"/>
<protein>
    <recommendedName>
        <fullName>Protein OPG190</fullName>
    </recommendedName>
    <alternativeName>
        <fullName>Plaque-size/host range protein</fullName>
    </alternativeName>
</protein>
<comment type="function">
    <text evidence="1">Plays a role in the dissolution of the outermost membrane of extracellular enveloped virions (EV) to allow virion entry into host cells. Also participates in wrapping mature virions (MV) to form enveloped virions (EV).</text>
</comment>
<comment type="subunit">
    <text evidence="1">Interacts with OPG161; this interaction is required for efficient targeting of OPG161 and OPG190 into enveloped virions. Interacts with OPG162; this interaction is required for the correct glycosylation, trafficking and stability of OPG162 and OPG190 incorporation into extracellular enveloped virions. Interacts with envelope phospholipase OPG057.</text>
</comment>
<comment type="subcellular location">
    <subcellularLocation>
        <location evidence="1">Virion membrane</location>
        <topology evidence="1">Single-pass type I membrane protein</topology>
    </subcellularLocation>
    <subcellularLocation>
        <location evidence="1">Host Golgi apparatus</location>
        <location evidence="1">Host trans-Golgi network</location>
    </subcellularLocation>
    <text evidence="1">OPG190 is found on enveloped virion (EV) membranes.</text>
</comment>
<comment type="induction">
    <text>Expressed in the early phase of the viral replicative cycle.</text>
</comment>
<comment type="similarity">
    <text evidence="4">Belongs to the receptors of complement activation (RCA) family.</text>
</comment>
<dbReference type="EMBL" id="M35027">
    <property type="protein sequence ID" value="AAA48201.1"/>
    <property type="molecule type" value="Genomic_DNA"/>
</dbReference>
<dbReference type="PIR" id="D42526">
    <property type="entry name" value="D42526"/>
</dbReference>
<dbReference type="SMR" id="P21115"/>
<dbReference type="Proteomes" id="UP000008269">
    <property type="component" value="Segment"/>
</dbReference>
<dbReference type="GO" id="GO:0044177">
    <property type="term" value="C:host cell Golgi apparatus"/>
    <property type="evidence" value="ECO:0007669"/>
    <property type="project" value="UniProtKB-SubCell"/>
</dbReference>
<dbReference type="GO" id="GO:0016020">
    <property type="term" value="C:membrane"/>
    <property type="evidence" value="ECO:0007669"/>
    <property type="project" value="UniProtKB-KW"/>
</dbReference>
<dbReference type="GO" id="GO:0055036">
    <property type="term" value="C:virion membrane"/>
    <property type="evidence" value="ECO:0007669"/>
    <property type="project" value="UniProtKB-SubCell"/>
</dbReference>
<dbReference type="GO" id="GO:0001848">
    <property type="term" value="F:complement binding"/>
    <property type="evidence" value="ECO:0007669"/>
    <property type="project" value="InterPro"/>
</dbReference>
<dbReference type="GO" id="GO:0045916">
    <property type="term" value="P:negative regulation of complement activation"/>
    <property type="evidence" value="ECO:0007669"/>
    <property type="project" value="InterPro"/>
</dbReference>
<dbReference type="CDD" id="cd00033">
    <property type="entry name" value="CCP"/>
    <property type="match status" value="3"/>
</dbReference>
<dbReference type="Gene3D" id="2.10.70.10">
    <property type="entry name" value="Complement Module, domain 1"/>
    <property type="match status" value="3"/>
</dbReference>
<dbReference type="InterPro" id="IPR011176">
    <property type="entry name" value="CCP_VACV_C3/B5"/>
</dbReference>
<dbReference type="InterPro" id="IPR051503">
    <property type="entry name" value="ComplSys_Reg/VirEntry_Med"/>
</dbReference>
<dbReference type="InterPro" id="IPR035976">
    <property type="entry name" value="Sushi/SCR/CCP_sf"/>
</dbReference>
<dbReference type="InterPro" id="IPR000436">
    <property type="entry name" value="Sushi_SCR_CCP_dom"/>
</dbReference>
<dbReference type="PANTHER" id="PTHR45785">
    <property type="entry name" value="COMPLEMENT FACTOR H-RELATED"/>
    <property type="match status" value="1"/>
</dbReference>
<dbReference type="PANTHER" id="PTHR45785:SF2">
    <property type="entry name" value="COMPLEMENT FACTOR H-RELATED"/>
    <property type="match status" value="1"/>
</dbReference>
<dbReference type="Pfam" id="PF00084">
    <property type="entry name" value="Sushi"/>
    <property type="match status" value="3"/>
</dbReference>
<dbReference type="PIRSF" id="PIRSF002486">
    <property type="entry name" value="CIP_VAC_C3L"/>
    <property type="match status" value="1"/>
</dbReference>
<dbReference type="SMART" id="SM00032">
    <property type="entry name" value="CCP"/>
    <property type="match status" value="4"/>
</dbReference>
<dbReference type="SUPFAM" id="SSF57535">
    <property type="entry name" value="Complement control module/SCR domain"/>
    <property type="match status" value="3"/>
</dbReference>
<dbReference type="PROSITE" id="PS50923">
    <property type="entry name" value="SUSHI"/>
    <property type="match status" value="3"/>
</dbReference>
<accession>P21115</accession>
<keyword id="KW-1015">Disulfide bond</keyword>
<keyword id="KW-0244">Early protein</keyword>
<keyword id="KW-1040">Host Golgi apparatus</keyword>
<keyword id="KW-0449">Lipoprotein</keyword>
<keyword id="KW-0472">Membrane</keyword>
<keyword id="KW-0564">Palmitate</keyword>
<keyword id="KW-1185">Reference proteome</keyword>
<keyword id="KW-0677">Repeat</keyword>
<keyword id="KW-0732">Signal</keyword>
<keyword id="KW-0768">Sushi</keyword>
<keyword id="KW-0812">Transmembrane</keyword>
<keyword id="KW-1133">Transmembrane helix</keyword>
<keyword id="KW-0946">Virion</keyword>
<reference key="1">
    <citation type="journal article" date="1990" name="Virology">
        <title>The complete DNA sequence of vaccinia virus.</title>
        <authorList>
            <person name="Goebel S.J."/>
            <person name="Johnson G.P."/>
            <person name="Perkus M.E."/>
            <person name="Davis S.W."/>
            <person name="Winslow J.P."/>
            <person name="Paoletti E."/>
        </authorList>
    </citation>
    <scope>NUCLEOTIDE SEQUENCE [LARGE SCALE GENOMIC DNA]</scope>
</reference>
<reference key="2">
    <citation type="journal article" date="1990" name="Virology">
        <title>Appendix to 'The complete DNA sequence of vaccinia virus'.</title>
        <authorList>
            <person name="Goebel S.J."/>
            <person name="Johnson G.P."/>
            <person name="Perkus M.E."/>
            <person name="Davis S.W."/>
            <person name="Winslow J.P."/>
            <person name="Paoletti E."/>
        </authorList>
    </citation>
    <scope>NUCLEOTIDE SEQUENCE [LARGE SCALE GENOMIC DNA]</scope>
</reference>
<gene>
    <name type="primary">OPG190</name>
    <name type="synonym">PS/HR</name>
    <name type="ORF">B5R</name>
</gene>
<organismHost>
    <name type="scientific">Homo sapiens</name>
    <name type="common">Human</name>
    <dbReference type="NCBI Taxonomy" id="9606"/>
</organismHost>
<feature type="signal peptide" evidence="2">
    <location>
        <begin position="1"/>
        <end position="17"/>
    </location>
</feature>
<feature type="chain" id="PRO_0000006017" description="Protein OPG190">
    <location>
        <begin position="18"/>
        <end position="317"/>
    </location>
</feature>
<feature type="topological domain" description="Virion surface" evidence="2">
    <location>
        <begin position="18"/>
        <end position="279"/>
    </location>
</feature>
<feature type="transmembrane region" description="Helical" evidence="2">
    <location>
        <begin position="280"/>
        <end position="300"/>
    </location>
</feature>
<feature type="topological domain" description="Intravirion" evidence="2">
    <location>
        <begin position="301"/>
        <end position="317"/>
    </location>
</feature>
<feature type="domain" description="Sushi 1" evidence="3">
    <location>
        <begin position="19"/>
        <end position="74"/>
    </location>
</feature>
<feature type="domain" description="Sushi 2" evidence="3">
    <location>
        <begin position="75"/>
        <end position="126"/>
    </location>
</feature>
<feature type="domain" description="Sushi 3" evidence="3">
    <location>
        <begin position="127"/>
        <end position="184"/>
    </location>
</feature>
<feature type="domain" description="Sushi 4" evidence="3">
    <location>
        <begin position="185"/>
        <end position="239"/>
    </location>
</feature>
<feature type="lipid moiety-binding region" description="S-palmitoyl cysteine; by host" evidence="1">
    <location>
        <position position="301"/>
    </location>
</feature>
<feature type="lipid moiety-binding region" description="S-palmitoyl cysteine; by host" evidence="1">
    <location>
        <position position="303"/>
    </location>
</feature>
<feature type="disulfide bond" evidence="3">
    <location>
        <begin position="21"/>
        <end position="61"/>
    </location>
</feature>
<feature type="disulfide bond" evidence="3">
    <location>
        <begin position="48"/>
        <end position="72"/>
    </location>
</feature>
<feature type="disulfide bond" evidence="3">
    <location>
        <begin position="76"/>
        <end position="110"/>
    </location>
</feature>
<feature type="disulfide bond" evidence="3">
    <location>
        <begin position="101"/>
        <end position="125"/>
    </location>
</feature>
<feature type="disulfide bond" evidence="3">
    <location>
        <begin position="130"/>
        <end position="171"/>
    </location>
</feature>
<feature type="disulfide bond" evidence="3">
    <location>
        <begin position="157"/>
        <end position="182"/>
    </location>
</feature>
<feature type="disulfide bond" evidence="3">
    <location>
        <begin position="186"/>
        <end position="225"/>
    </location>
</feature>
<feature type="disulfide bond" evidence="3">
    <location>
        <begin position="211"/>
        <end position="237"/>
    </location>
</feature>
<sequence length="317" mass="35109">MKTISVVTLLCVLPAVVYSTCTVPTMNNAKLTSTETSFNNNQKVTFTCDQGYHSSDPNAVCETDKWKYENPCKKMCTVSDYISELYNKPLYEVNSTMTLSCNGETKYFRCEEKNGNTSWNDTVTCPNAECQPLQLEHGSCQPVKEKYSFGEYMTINCDVGYEVIGASYISCTANSWNVIPSCQQKCDIPSLSNGLISGSTFSIGGVIHLSCKSGFILTGSPSSTCIDGKWNPVLPICVRTNEEFDPVDDGPDDETDLSKLSKDVVQYEQEIESLEATYHIIIVALTIMGVIFLISVIVLVCSCDKNNDQYKFHKLLP</sequence>
<organism>
    <name type="scientific">Vaccinia virus (strain Copenhagen)</name>
    <name type="common">VACV</name>
    <dbReference type="NCBI Taxonomy" id="10249"/>
    <lineage>
        <taxon>Viruses</taxon>
        <taxon>Varidnaviria</taxon>
        <taxon>Bamfordvirae</taxon>
        <taxon>Nucleocytoviricota</taxon>
        <taxon>Pokkesviricetes</taxon>
        <taxon>Chitovirales</taxon>
        <taxon>Poxviridae</taxon>
        <taxon>Chordopoxvirinae</taxon>
        <taxon>Orthopoxvirus</taxon>
        <taxon>Vaccinia virus</taxon>
    </lineage>
</organism>
<evidence type="ECO:0000250" key="1">
    <source>
        <dbReference type="UniProtKB" id="Q01227"/>
    </source>
</evidence>
<evidence type="ECO:0000255" key="2"/>
<evidence type="ECO:0000255" key="3">
    <source>
        <dbReference type="PROSITE-ProRule" id="PRU00302"/>
    </source>
</evidence>
<evidence type="ECO:0000305" key="4"/>
<name>PG190_VACCC</name>